<reference key="1">
    <citation type="journal article" date="2013" name="Nature">
        <title>The zebrafish reference genome sequence and its relationship to the human genome.</title>
        <authorList>
            <person name="Howe K."/>
            <person name="Clark M.D."/>
            <person name="Torroja C.F."/>
            <person name="Torrance J."/>
            <person name="Berthelot C."/>
            <person name="Muffato M."/>
            <person name="Collins J.E."/>
            <person name="Humphray S."/>
            <person name="McLaren K."/>
            <person name="Matthews L."/>
            <person name="McLaren S."/>
            <person name="Sealy I."/>
            <person name="Caccamo M."/>
            <person name="Churcher C."/>
            <person name="Scott C."/>
            <person name="Barrett J.C."/>
            <person name="Koch R."/>
            <person name="Rauch G.J."/>
            <person name="White S."/>
            <person name="Chow W."/>
            <person name="Kilian B."/>
            <person name="Quintais L.T."/>
            <person name="Guerra-Assuncao J.A."/>
            <person name="Zhou Y."/>
            <person name="Gu Y."/>
            <person name="Yen J."/>
            <person name="Vogel J.H."/>
            <person name="Eyre T."/>
            <person name="Redmond S."/>
            <person name="Banerjee R."/>
            <person name="Chi J."/>
            <person name="Fu B."/>
            <person name="Langley E."/>
            <person name="Maguire S.F."/>
            <person name="Laird G.K."/>
            <person name="Lloyd D."/>
            <person name="Kenyon E."/>
            <person name="Donaldson S."/>
            <person name="Sehra H."/>
            <person name="Almeida-King J."/>
            <person name="Loveland J."/>
            <person name="Trevanion S."/>
            <person name="Jones M."/>
            <person name="Quail M."/>
            <person name="Willey D."/>
            <person name="Hunt A."/>
            <person name="Burton J."/>
            <person name="Sims S."/>
            <person name="McLay K."/>
            <person name="Plumb B."/>
            <person name="Davis J."/>
            <person name="Clee C."/>
            <person name="Oliver K."/>
            <person name="Clark R."/>
            <person name="Riddle C."/>
            <person name="Elliot D."/>
            <person name="Threadgold G."/>
            <person name="Harden G."/>
            <person name="Ware D."/>
            <person name="Begum S."/>
            <person name="Mortimore B."/>
            <person name="Kerry G."/>
            <person name="Heath P."/>
            <person name="Phillimore B."/>
            <person name="Tracey A."/>
            <person name="Corby N."/>
            <person name="Dunn M."/>
            <person name="Johnson C."/>
            <person name="Wood J."/>
            <person name="Clark S."/>
            <person name="Pelan S."/>
            <person name="Griffiths G."/>
            <person name="Smith M."/>
            <person name="Glithero R."/>
            <person name="Howden P."/>
            <person name="Barker N."/>
            <person name="Lloyd C."/>
            <person name="Stevens C."/>
            <person name="Harley J."/>
            <person name="Holt K."/>
            <person name="Panagiotidis G."/>
            <person name="Lovell J."/>
            <person name="Beasley H."/>
            <person name="Henderson C."/>
            <person name="Gordon D."/>
            <person name="Auger K."/>
            <person name="Wright D."/>
            <person name="Collins J."/>
            <person name="Raisen C."/>
            <person name="Dyer L."/>
            <person name="Leung K."/>
            <person name="Robertson L."/>
            <person name="Ambridge K."/>
            <person name="Leongamornlert D."/>
            <person name="McGuire S."/>
            <person name="Gilderthorp R."/>
            <person name="Griffiths C."/>
            <person name="Manthravadi D."/>
            <person name="Nichol S."/>
            <person name="Barker G."/>
            <person name="Whitehead S."/>
            <person name="Kay M."/>
            <person name="Brown J."/>
            <person name="Murnane C."/>
            <person name="Gray E."/>
            <person name="Humphries M."/>
            <person name="Sycamore N."/>
            <person name="Barker D."/>
            <person name="Saunders D."/>
            <person name="Wallis J."/>
            <person name="Babbage A."/>
            <person name="Hammond S."/>
            <person name="Mashreghi-Mohammadi M."/>
            <person name="Barr L."/>
            <person name="Martin S."/>
            <person name="Wray P."/>
            <person name="Ellington A."/>
            <person name="Matthews N."/>
            <person name="Ellwood M."/>
            <person name="Woodmansey R."/>
            <person name="Clark G."/>
            <person name="Cooper J."/>
            <person name="Tromans A."/>
            <person name="Grafham D."/>
            <person name="Skuce C."/>
            <person name="Pandian R."/>
            <person name="Andrews R."/>
            <person name="Harrison E."/>
            <person name="Kimberley A."/>
            <person name="Garnett J."/>
            <person name="Fosker N."/>
            <person name="Hall R."/>
            <person name="Garner P."/>
            <person name="Kelly D."/>
            <person name="Bird C."/>
            <person name="Palmer S."/>
            <person name="Gehring I."/>
            <person name="Berger A."/>
            <person name="Dooley C.M."/>
            <person name="Ersan-Urun Z."/>
            <person name="Eser C."/>
            <person name="Geiger H."/>
            <person name="Geisler M."/>
            <person name="Karotki L."/>
            <person name="Kirn A."/>
            <person name="Konantz J."/>
            <person name="Konantz M."/>
            <person name="Oberlander M."/>
            <person name="Rudolph-Geiger S."/>
            <person name="Teucke M."/>
            <person name="Lanz C."/>
            <person name="Raddatz G."/>
            <person name="Osoegawa K."/>
            <person name="Zhu B."/>
            <person name="Rapp A."/>
            <person name="Widaa S."/>
            <person name="Langford C."/>
            <person name="Yang F."/>
            <person name="Schuster S.C."/>
            <person name="Carter N.P."/>
            <person name="Harrow J."/>
            <person name="Ning Z."/>
            <person name="Herrero J."/>
            <person name="Searle S.M."/>
            <person name="Enright A."/>
            <person name="Geisler R."/>
            <person name="Plasterk R.H."/>
            <person name="Lee C."/>
            <person name="Westerfield M."/>
            <person name="de Jong P.J."/>
            <person name="Zon L.I."/>
            <person name="Postlethwait J.H."/>
            <person name="Nusslein-Volhard C."/>
            <person name="Hubbard T.J."/>
            <person name="Roest Crollius H."/>
            <person name="Rogers J."/>
            <person name="Stemple D.L."/>
        </authorList>
    </citation>
    <scope>NUCLEOTIDE SEQUENCE [LARGE SCALE GENOMIC DNA]</scope>
    <source>
        <strain>Tuebingen</strain>
    </source>
</reference>
<reference key="2">
    <citation type="submission" date="2005-03" db="EMBL/GenBank/DDBJ databases">
        <authorList>
            <consortium name="NIH - Zebrafish Gene Collection (ZGC) project"/>
        </authorList>
    </citation>
    <scope>NUCLEOTIDE SEQUENCE [LARGE SCALE MRNA]</scope>
    <source>
        <tissue>Olfactory epithelium</tissue>
    </source>
</reference>
<name>MEIG1_DANRE</name>
<keyword id="KW-0221">Differentiation</keyword>
<keyword id="KW-1185">Reference proteome</keyword>
<keyword id="KW-0744">Spermatogenesis</keyword>
<dbReference type="EMBL" id="BX901962">
    <property type="protein sequence ID" value="CAI20678.2"/>
    <property type="molecule type" value="Genomic_DNA"/>
</dbReference>
<dbReference type="EMBL" id="BC091461">
    <property type="protein sequence ID" value="AAH91461.1"/>
    <property type="molecule type" value="mRNA"/>
</dbReference>
<dbReference type="RefSeq" id="NP_001013488.1">
    <property type="nucleotide sequence ID" value="NM_001013470.1"/>
</dbReference>
<dbReference type="RefSeq" id="XP_068075716.1">
    <property type="nucleotide sequence ID" value="XM_068219615.1"/>
</dbReference>
<dbReference type="SMR" id="Q5RGE4"/>
<dbReference type="FunCoup" id="Q5RGE4">
    <property type="interactions" value="195"/>
</dbReference>
<dbReference type="STRING" id="7955.ENSDARP00000121928"/>
<dbReference type="PaxDb" id="7955-ENSDARP00000121928"/>
<dbReference type="Ensembl" id="ENSDART00000142284">
    <property type="protein sequence ID" value="ENSDARP00000121928"/>
    <property type="gene ID" value="ENSDARG00000045705"/>
</dbReference>
<dbReference type="Ensembl" id="ENSDART00000150687">
    <property type="protein sequence ID" value="ENSDARP00000125368"/>
    <property type="gene ID" value="ENSDARG00000045705"/>
</dbReference>
<dbReference type="Ensembl" id="ENSDART00000180751">
    <property type="protein sequence ID" value="ENSDARP00000146834"/>
    <property type="gene ID" value="ENSDARG00000115242"/>
</dbReference>
<dbReference type="Ensembl" id="ENSDART00000192283">
    <property type="protein sequence ID" value="ENSDARP00000144884"/>
    <property type="gene ID" value="ENSDARG00000114008"/>
</dbReference>
<dbReference type="GeneID" id="541343"/>
<dbReference type="KEGG" id="dre:541343"/>
<dbReference type="AGR" id="ZFIN:ZDB-GENE-050320-33"/>
<dbReference type="CTD" id="644890"/>
<dbReference type="ZFIN" id="ZDB-GENE-050320-33">
    <property type="gene designation" value="meig1"/>
</dbReference>
<dbReference type="eggNOG" id="ENOG502S7BQ">
    <property type="taxonomic scope" value="Eukaryota"/>
</dbReference>
<dbReference type="HOGENOM" id="CLU_160103_0_0_1"/>
<dbReference type="InParanoid" id="Q5RGE4"/>
<dbReference type="OMA" id="WPHNGYV"/>
<dbReference type="OrthoDB" id="10023051at2759"/>
<dbReference type="PhylomeDB" id="Q5RGE4"/>
<dbReference type="TreeFam" id="TF329080"/>
<dbReference type="PRO" id="PR:Q5RGE4"/>
<dbReference type="Proteomes" id="UP000000437">
    <property type="component" value="Alternate scaffold 4"/>
</dbReference>
<dbReference type="Proteomes" id="UP000000437">
    <property type="component" value="Chromosome 4"/>
</dbReference>
<dbReference type="Bgee" id="ENSDARG00000045705">
    <property type="expression patterns" value="Expressed in testis and 22 other cell types or tissues"/>
</dbReference>
<dbReference type="GO" id="GO:0005634">
    <property type="term" value="C:nucleus"/>
    <property type="evidence" value="ECO:0000318"/>
    <property type="project" value="GO_Central"/>
</dbReference>
<dbReference type="GO" id="GO:0030154">
    <property type="term" value="P:cell differentiation"/>
    <property type="evidence" value="ECO:0007669"/>
    <property type="project" value="UniProtKB-KW"/>
</dbReference>
<dbReference type="GO" id="GO:0007283">
    <property type="term" value="P:spermatogenesis"/>
    <property type="evidence" value="ECO:0007669"/>
    <property type="project" value="UniProtKB-KW"/>
</dbReference>
<dbReference type="InterPro" id="IPR020186">
    <property type="entry name" value="Meiosis-expressed_gene_1"/>
</dbReference>
<dbReference type="PANTHER" id="PTHR17008:SF1">
    <property type="entry name" value="MEIOSIS EXPRESSED GENE 1 PROTEIN HOMOLOG"/>
    <property type="match status" value="1"/>
</dbReference>
<dbReference type="PANTHER" id="PTHR17008">
    <property type="entry name" value="MEIOSIS-EXPRESSED GENE 1 PROTEIN"/>
    <property type="match status" value="1"/>
</dbReference>
<dbReference type="Pfam" id="PF15163">
    <property type="entry name" value="Meiosis_expr"/>
    <property type="match status" value="1"/>
</dbReference>
<organism>
    <name type="scientific">Danio rerio</name>
    <name type="common">Zebrafish</name>
    <name type="synonym">Brachydanio rerio</name>
    <dbReference type="NCBI Taxonomy" id="7955"/>
    <lineage>
        <taxon>Eukaryota</taxon>
        <taxon>Metazoa</taxon>
        <taxon>Chordata</taxon>
        <taxon>Craniata</taxon>
        <taxon>Vertebrata</taxon>
        <taxon>Euteleostomi</taxon>
        <taxon>Actinopterygii</taxon>
        <taxon>Neopterygii</taxon>
        <taxon>Teleostei</taxon>
        <taxon>Ostariophysi</taxon>
        <taxon>Cypriniformes</taxon>
        <taxon>Danionidae</taxon>
        <taxon>Danioninae</taxon>
        <taxon>Danio</taxon>
    </lineage>
</organism>
<evidence type="ECO:0000250" key="1"/>
<evidence type="ECO:0000305" key="2"/>
<accession>Q5RGE4</accession>
<accession>Q5BJJ1</accession>
<feature type="chain" id="PRO_0000313026" description="Meiosis expressed gene 1 protein homolog">
    <location>
        <begin position="1"/>
        <end position="92"/>
    </location>
</feature>
<feature type="sequence conflict" description="In Ref. 2; AAH91461." evidence="2" ref="2">
    <original>C</original>
    <variation>S</variation>
    <location>
        <position position="79"/>
    </location>
</feature>
<sequence length="92" mass="11249">MACAVLLDNNAKPKSMSRAKQWTGEVENLYRFQQAGYRDELEYRQIKQAEIDRWPDTGFVKKLQRRDNTFYYYNRKRECEDREVHKVKVYAY</sequence>
<gene>
    <name type="primary">meig1</name>
    <name type="ORF">si:dkey-153k10.4</name>
    <name type="ORF">zgc:110359</name>
</gene>
<protein>
    <recommendedName>
        <fullName>Meiosis expressed gene 1 protein homolog</fullName>
    </recommendedName>
</protein>
<proteinExistence type="inferred from homology"/>
<comment type="function">
    <text evidence="1">Essential for spermiogenesis.</text>
</comment>
<comment type="similarity">
    <text evidence="2">Belongs to the MEIG1 family.</text>
</comment>